<keyword id="KW-0030">Aminoacyl-tRNA synthetase</keyword>
<keyword id="KW-0067">ATP-binding</keyword>
<keyword id="KW-0963">Cytoplasm</keyword>
<keyword id="KW-0436">Ligase</keyword>
<keyword id="KW-0547">Nucleotide-binding</keyword>
<keyword id="KW-0648">Protein biosynthesis</keyword>
<keyword id="KW-1185">Reference proteome</keyword>
<reference key="1">
    <citation type="submission" date="2003-06" db="EMBL/GenBank/DDBJ databases">
        <title>The complete genome sequence of Haemophilus ducreyi.</title>
        <authorList>
            <person name="Munson R.S. Jr."/>
            <person name="Ray W.C."/>
            <person name="Mahairas G."/>
            <person name="Sabo P."/>
            <person name="Mungur R."/>
            <person name="Johnson L."/>
            <person name="Nguyen D."/>
            <person name="Wang J."/>
            <person name="Forst C."/>
            <person name="Hood L."/>
        </authorList>
    </citation>
    <scope>NUCLEOTIDE SEQUENCE [LARGE SCALE GENOMIC DNA]</scope>
    <source>
        <strain>35000HP / ATCC 700724</strain>
    </source>
</reference>
<evidence type="ECO:0000255" key="1">
    <source>
        <dbReference type="HAMAP-Rule" id="MF_00022"/>
    </source>
</evidence>
<feature type="chain" id="PRO_0000119571" description="Glutamate--tRNA ligase">
    <location>
        <begin position="1"/>
        <end position="479"/>
    </location>
</feature>
<feature type="short sequence motif" description="'HIGH' region" evidence="1">
    <location>
        <begin position="21"/>
        <end position="31"/>
    </location>
</feature>
<feature type="short sequence motif" description="'KMSKS' region" evidence="1">
    <location>
        <begin position="248"/>
        <end position="252"/>
    </location>
</feature>
<feature type="binding site" evidence="1">
    <location>
        <position position="251"/>
    </location>
    <ligand>
        <name>ATP</name>
        <dbReference type="ChEBI" id="CHEBI:30616"/>
    </ligand>
</feature>
<dbReference type="EC" id="6.1.1.17" evidence="1"/>
<dbReference type="EMBL" id="AE017143">
    <property type="protein sequence ID" value="AAP95297.1"/>
    <property type="molecule type" value="Genomic_DNA"/>
</dbReference>
<dbReference type="RefSeq" id="WP_010944350.1">
    <property type="nucleotide sequence ID" value="NC_002940.2"/>
</dbReference>
<dbReference type="SMR" id="Q7VNZ3"/>
<dbReference type="STRING" id="233412.HD_0320"/>
<dbReference type="KEGG" id="hdu:HD_0320"/>
<dbReference type="eggNOG" id="COG0008">
    <property type="taxonomic scope" value="Bacteria"/>
</dbReference>
<dbReference type="HOGENOM" id="CLU_015768_6_3_6"/>
<dbReference type="OrthoDB" id="9807503at2"/>
<dbReference type="Proteomes" id="UP000001022">
    <property type="component" value="Chromosome"/>
</dbReference>
<dbReference type="GO" id="GO:0005829">
    <property type="term" value="C:cytosol"/>
    <property type="evidence" value="ECO:0007669"/>
    <property type="project" value="TreeGrafter"/>
</dbReference>
<dbReference type="GO" id="GO:0005524">
    <property type="term" value="F:ATP binding"/>
    <property type="evidence" value="ECO:0007669"/>
    <property type="project" value="UniProtKB-UniRule"/>
</dbReference>
<dbReference type="GO" id="GO:0004818">
    <property type="term" value="F:glutamate-tRNA ligase activity"/>
    <property type="evidence" value="ECO:0007669"/>
    <property type="project" value="UniProtKB-UniRule"/>
</dbReference>
<dbReference type="GO" id="GO:0000049">
    <property type="term" value="F:tRNA binding"/>
    <property type="evidence" value="ECO:0007669"/>
    <property type="project" value="InterPro"/>
</dbReference>
<dbReference type="GO" id="GO:0008270">
    <property type="term" value="F:zinc ion binding"/>
    <property type="evidence" value="ECO:0007669"/>
    <property type="project" value="InterPro"/>
</dbReference>
<dbReference type="GO" id="GO:0006424">
    <property type="term" value="P:glutamyl-tRNA aminoacylation"/>
    <property type="evidence" value="ECO:0007669"/>
    <property type="project" value="UniProtKB-UniRule"/>
</dbReference>
<dbReference type="CDD" id="cd00808">
    <property type="entry name" value="GluRS_core"/>
    <property type="match status" value="1"/>
</dbReference>
<dbReference type="FunFam" id="3.40.50.620:FF:000007">
    <property type="entry name" value="Glutamate--tRNA ligase"/>
    <property type="match status" value="1"/>
</dbReference>
<dbReference type="Gene3D" id="1.10.10.350">
    <property type="match status" value="1"/>
</dbReference>
<dbReference type="Gene3D" id="3.40.50.620">
    <property type="entry name" value="HUPs"/>
    <property type="match status" value="1"/>
</dbReference>
<dbReference type="HAMAP" id="MF_00022">
    <property type="entry name" value="Glu_tRNA_synth_type1"/>
    <property type="match status" value="1"/>
</dbReference>
<dbReference type="InterPro" id="IPR045462">
    <property type="entry name" value="aa-tRNA-synth_I_cd-bd"/>
</dbReference>
<dbReference type="InterPro" id="IPR020751">
    <property type="entry name" value="aa-tRNA-synth_I_codon-bd_sub2"/>
</dbReference>
<dbReference type="InterPro" id="IPR001412">
    <property type="entry name" value="aa-tRNA-synth_I_CS"/>
</dbReference>
<dbReference type="InterPro" id="IPR008925">
    <property type="entry name" value="aa_tRNA-synth_I_cd-bd_sf"/>
</dbReference>
<dbReference type="InterPro" id="IPR004527">
    <property type="entry name" value="Glu-tRNA-ligase_bac/mito"/>
</dbReference>
<dbReference type="InterPro" id="IPR000924">
    <property type="entry name" value="Glu/Gln-tRNA-synth"/>
</dbReference>
<dbReference type="InterPro" id="IPR020058">
    <property type="entry name" value="Glu/Gln-tRNA-synth_Ib_cat-dom"/>
</dbReference>
<dbReference type="InterPro" id="IPR049940">
    <property type="entry name" value="GluQ/Sye"/>
</dbReference>
<dbReference type="InterPro" id="IPR033910">
    <property type="entry name" value="GluRS_core"/>
</dbReference>
<dbReference type="InterPro" id="IPR014729">
    <property type="entry name" value="Rossmann-like_a/b/a_fold"/>
</dbReference>
<dbReference type="NCBIfam" id="TIGR00464">
    <property type="entry name" value="gltX_bact"/>
    <property type="match status" value="1"/>
</dbReference>
<dbReference type="PANTHER" id="PTHR43311">
    <property type="entry name" value="GLUTAMATE--TRNA LIGASE"/>
    <property type="match status" value="1"/>
</dbReference>
<dbReference type="PANTHER" id="PTHR43311:SF2">
    <property type="entry name" value="GLUTAMATE--TRNA LIGASE, MITOCHONDRIAL-RELATED"/>
    <property type="match status" value="1"/>
</dbReference>
<dbReference type="Pfam" id="PF19269">
    <property type="entry name" value="Anticodon_2"/>
    <property type="match status" value="1"/>
</dbReference>
<dbReference type="Pfam" id="PF00749">
    <property type="entry name" value="tRNA-synt_1c"/>
    <property type="match status" value="1"/>
</dbReference>
<dbReference type="PRINTS" id="PR00987">
    <property type="entry name" value="TRNASYNTHGLU"/>
</dbReference>
<dbReference type="SUPFAM" id="SSF48163">
    <property type="entry name" value="An anticodon-binding domain of class I aminoacyl-tRNA synthetases"/>
    <property type="match status" value="1"/>
</dbReference>
<dbReference type="SUPFAM" id="SSF52374">
    <property type="entry name" value="Nucleotidylyl transferase"/>
    <property type="match status" value="1"/>
</dbReference>
<dbReference type="PROSITE" id="PS00178">
    <property type="entry name" value="AA_TRNA_LIGASE_I"/>
    <property type="match status" value="1"/>
</dbReference>
<name>SYE_HAEDU</name>
<sequence length="479" mass="54915">MNIETLFPLDPNVKVRTRFAPSPTGYLHVGGARTALYSWLYAKHFNGEFVLRIEDTDLERSTPEATAAILEGMEWLNLTWEHGPYFQTKRFDRYNQVIDQMIEQGLAYRCYCSKDRLEQLRNEQEASKEKPRYDRHCLNHQDRSINEPHVVRFKNPQQGSVVFDDAVRGRIEISNSELDDLIIRRTDGSPTYNFCVVVDDWDMGITHVVRGEDHINNTPRQINILKALGAPIPTYAHVSMINGDDGQKLSKRHGAVSVMQYRDDGYLPEALINYLVRLGWGHGDQEIFSREEMIELFDLHSVSRSASAFNTEKLQWLNQHYMRTLPAEYVAKYLEWHMHDQAIDIANGPTLTELIPVLSERAKTLKELATASRYFYQEFDAYDEKAVAKTFKLEAEQPLTMLWEKLTALVDWNVENIHQAMNATATELGIGMGKVGMPFRLAVTGSAQSPSMDITAKLVGRERTLARLQKAIKFIQAQS</sequence>
<gene>
    <name evidence="1" type="primary">gltX</name>
    <name type="ordered locus">HD_0320</name>
</gene>
<comment type="function">
    <text evidence="1">Catalyzes the attachment of glutamate to tRNA(Glu) in a two-step reaction: glutamate is first activated by ATP to form Glu-AMP and then transferred to the acceptor end of tRNA(Glu).</text>
</comment>
<comment type="catalytic activity">
    <reaction evidence="1">
        <text>tRNA(Glu) + L-glutamate + ATP = L-glutamyl-tRNA(Glu) + AMP + diphosphate</text>
        <dbReference type="Rhea" id="RHEA:23540"/>
        <dbReference type="Rhea" id="RHEA-COMP:9663"/>
        <dbReference type="Rhea" id="RHEA-COMP:9680"/>
        <dbReference type="ChEBI" id="CHEBI:29985"/>
        <dbReference type="ChEBI" id="CHEBI:30616"/>
        <dbReference type="ChEBI" id="CHEBI:33019"/>
        <dbReference type="ChEBI" id="CHEBI:78442"/>
        <dbReference type="ChEBI" id="CHEBI:78520"/>
        <dbReference type="ChEBI" id="CHEBI:456215"/>
        <dbReference type="EC" id="6.1.1.17"/>
    </reaction>
</comment>
<comment type="subunit">
    <text evidence="1">Monomer.</text>
</comment>
<comment type="subcellular location">
    <subcellularLocation>
        <location evidence="1">Cytoplasm</location>
    </subcellularLocation>
</comment>
<comment type="similarity">
    <text evidence="1">Belongs to the class-I aminoacyl-tRNA synthetase family. Glutamate--tRNA ligase type 1 subfamily.</text>
</comment>
<organism>
    <name type="scientific">Haemophilus ducreyi (strain 35000HP / ATCC 700724)</name>
    <dbReference type="NCBI Taxonomy" id="233412"/>
    <lineage>
        <taxon>Bacteria</taxon>
        <taxon>Pseudomonadati</taxon>
        <taxon>Pseudomonadota</taxon>
        <taxon>Gammaproteobacteria</taxon>
        <taxon>Pasteurellales</taxon>
        <taxon>Pasteurellaceae</taxon>
        <taxon>Haemophilus</taxon>
    </lineage>
</organism>
<accession>Q7VNZ3</accession>
<protein>
    <recommendedName>
        <fullName evidence="1">Glutamate--tRNA ligase</fullName>
        <ecNumber evidence="1">6.1.1.17</ecNumber>
    </recommendedName>
    <alternativeName>
        <fullName evidence="1">Glutamyl-tRNA synthetase</fullName>
        <shortName evidence="1">GluRS</shortName>
    </alternativeName>
</protein>
<proteinExistence type="inferred from homology"/>